<keyword id="KW-0007">Acetylation</keyword>
<keyword id="KW-0963">Cytoplasm</keyword>
<keyword id="KW-0539">Nucleus</keyword>
<keyword id="KW-0597">Phosphoprotein</keyword>
<keyword id="KW-0653">Protein transport</keyword>
<keyword id="KW-1185">Reference proteome</keyword>
<keyword id="KW-0694">RNA-binding</keyword>
<keyword id="KW-0813">Transport</keyword>
<sequence>MAQEAGDMDDGQVSDSDSDMTVAPSDRPLPVPKALGGDCGLRPFQSTATACAPASHYRTVKSVDSSEESFSDSDDDSSVWKRKRQKCFNTPPKPEPFQFDQSSQKPPIAGRKKVNNIWSAVLQEQNQDAVATELGILGMEGTIDRSRQSETYNYLLAKKLKRESQEHTKELDKELEEYMHGGKKTGPKEEENGQGHPKRKRPVKDRVGDRLEMNYKGRYEITEDDSQERVADEISFRLQEPKKDLIARVVRIIGNKKAIELLMETAEVEQNGGLFIMNGSRRRTPGGVFLNLLKNTPSISEEQIKDIFYLENQKEYENKKAARKRRIQVMGKKMKQAIKNLNFQEDDDTSRETFASDTNEALASLDESQEGHGETKLDAEEAIEVDHSHDLDMF</sequence>
<feature type="initiator methionine" description="Removed" evidence="3">
    <location>
        <position position="1"/>
    </location>
</feature>
<feature type="chain" id="PRO_0000239774" description="Phosphorylated adapter RNA export protein">
    <location>
        <begin position="2"/>
        <end position="394"/>
    </location>
</feature>
<feature type="region of interest" description="Disordered" evidence="5">
    <location>
        <begin position="1"/>
        <end position="109"/>
    </location>
</feature>
<feature type="region of interest" description="Necessary for interaction with CBP80" evidence="1">
    <location>
        <begin position="2"/>
        <end position="329"/>
    </location>
</feature>
<feature type="region of interest" description="Disordered" evidence="5">
    <location>
        <begin position="178"/>
        <end position="208"/>
    </location>
</feature>
<feature type="region of interest" description="Sufficient for poly U RNA-binding" evidence="1">
    <location>
        <begin position="228"/>
        <end position="328"/>
    </location>
</feature>
<feature type="region of interest" description="Necessary for poly U RNA-binding and snRNA export" evidence="1">
    <location>
        <begin position="279"/>
        <end position="287"/>
    </location>
</feature>
<feature type="region of interest" description="Disordered" evidence="5">
    <location>
        <begin position="365"/>
        <end position="394"/>
    </location>
</feature>
<feature type="short sequence motif" description="Nuclear localization signal" evidence="1">
    <location>
        <begin position="81"/>
        <end position="84"/>
    </location>
</feature>
<feature type="short sequence motif" description="Nuclear export signal" evidence="1">
    <location>
        <begin position="130"/>
        <end position="139"/>
    </location>
</feature>
<feature type="short sequence motif" description="Nuclear localization signal" evidence="1">
    <location>
        <begin position="198"/>
        <end position="201"/>
    </location>
</feature>
<feature type="compositionally biased region" description="Acidic residues" evidence="5">
    <location>
        <begin position="1"/>
        <end position="18"/>
    </location>
</feature>
<feature type="compositionally biased region" description="Acidic residues" evidence="5">
    <location>
        <begin position="65"/>
        <end position="77"/>
    </location>
</feature>
<feature type="compositionally biased region" description="Basic and acidic residues" evidence="5">
    <location>
        <begin position="178"/>
        <end position="193"/>
    </location>
</feature>
<feature type="compositionally biased region" description="Basic and acidic residues" evidence="5">
    <location>
        <begin position="369"/>
        <end position="394"/>
    </location>
</feature>
<feature type="modified residue" description="N-acetylalanine" evidence="3">
    <location>
        <position position="2"/>
    </location>
</feature>
<feature type="modified residue" description="Phosphoserine" evidence="3">
    <location>
        <position position="14"/>
    </location>
</feature>
<feature type="modified residue" description="Phosphoserine" evidence="3">
    <location>
        <position position="16"/>
    </location>
</feature>
<feature type="modified residue" description="Phosphoserine" evidence="2">
    <location>
        <position position="65"/>
    </location>
</feature>
<feature type="modified residue" description="Phosphoserine" evidence="2">
    <location>
        <position position="66"/>
    </location>
</feature>
<feature type="modified residue" description="Phosphoserine" evidence="2">
    <location>
        <position position="69"/>
    </location>
</feature>
<feature type="modified residue" description="Phosphoserine" evidence="2">
    <location>
        <position position="73"/>
    </location>
</feature>
<feature type="modified residue" description="Phosphoserine" evidence="2">
    <location>
        <position position="226"/>
    </location>
</feature>
<feature type="modified residue" description="Phosphothreonine" evidence="3">
    <location>
        <position position="296"/>
    </location>
</feature>
<feature type="modified residue" description="Phosphoserine" evidence="3">
    <location>
        <position position="356"/>
    </location>
</feature>
<feature type="modified residue" description="Phosphoserine" evidence="3">
    <location>
        <position position="368"/>
    </location>
</feature>
<feature type="sequence conflict" description="In Ref. 1; AAI05228." evidence="6" ref="1">
    <original>M</original>
    <variation>W</variation>
    <location>
        <position position="1"/>
    </location>
</feature>
<organism>
    <name type="scientific">Bos taurus</name>
    <name type="common">Bovine</name>
    <dbReference type="NCBI Taxonomy" id="9913"/>
    <lineage>
        <taxon>Eukaryota</taxon>
        <taxon>Metazoa</taxon>
        <taxon>Chordata</taxon>
        <taxon>Craniata</taxon>
        <taxon>Vertebrata</taxon>
        <taxon>Euteleostomi</taxon>
        <taxon>Mammalia</taxon>
        <taxon>Eutheria</taxon>
        <taxon>Laurasiatheria</taxon>
        <taxon>Artiodactyla</taxon>
        <taxon>Ruminantia</taxon>
        <taxon>Pecora</taxon>
        <taxon>Bovidae</taxon>
        <taxon>Bovinae</taxon>
        <taxon>Bos</taxon>
    </lineage>
</organism>
<comment type="function">
    <text evidence="1">A phosphoprotein adapter involved in the XPO1-mediated U snRNA export from the nucleus. Bridge components required for U snRNA export, the cap binding complex (CBC)-bound snRNA on the one hand and the GTPase Ran in its active GTP-bound form together with the export receptor XPO1 on the other. Its phosphorylation in the nucleus is required for U snRNA export complex assembly and export, while its dephosphorylation in the cytoplasm causes export complex disassembly. It is recycled back to the nucleus via the importin alpha/beta heterodimeric import receptor. The directionality of nuclear export is thought to be conferred by an asymmetric distribution of the GTP- and GDP-bound forms of Ran between the cytoplasm and nucleus. Its compartmentalized phosphorylation cycle may also contribute to the directionality of export. Binds strongly to m7G-capped U1 and U5 small nuclear RNAs (snRNAs) in a sequence-unspecific manner and phosphorylation-independent manner. Also plays a role in the biogenesis of U3 small nucleolar RNA (snoRNA). Involved in the U3 snoRNA transport from nucleoplasm to Cajal bodies. Binds strongly to m7G-capped U3, U8 and U13 precursor snoRNAs and weakly to trimethylated (TMG)-capped U3, U8 and U13 snoRNAs. Also binds to telomerase RNA (By similarity).</text>
</comment>
<comment type="subunit">
    <text evidence="3 4">Found in a U snRNA export complex with PHAX/RNUXA, NCBP1/CBP80, NCBP2/CBP20, RAN, XPO1 and m7G-capped RNA. Part of a precomplex with PHAX/RNUXA, NCBP1/CBP80, NCBP2/CBP20 and m7G-capped RNA. Interacts with NCBP1/CBP80. Found in a complex with snoRNA, Interacts with NCBP2/CBP20 (By similarity). Interacts with DDX39A; this interaction stimulates PHAX RNA binding activity (By similarity).</text>
</comment>
<comment type="subcellular location">
    <subcellularLocation>
        <location evidence="3">Nucleus</location>
        <location evidence="3">Nucleoplasm</location>
    </subcellularLocation>
    <subcellularLocation>
        <location evidence="3">Nucleus</location>
        <location evidence="3">Cajal body</location>
    </subcellularLocation>
    <subcellularLocation>
        <location evidence="3">Cytoplasm</location>
    </subcellularLocation>
    <text evidence="3">Located in the nucleoplasm and Cajal bodies. Shuttles between the nucleus and the cytoplasm. Shuttles between the nucleoplasm and Cajal bodies.</text>
</comment>
<comment type="PTM">
    <text>Phosphorylated in the nucleus. Dephosphorylated in the cytoplasm.</text>
</comment>
<comment type="similarity">
    <text evidence="6">Belongs to the PHAX family.</text>
</comment>
<name>PHAX_BOVIN</name>
<reference key="1">
    <citation type="submission" date="2005-09" db="EMBL/GenBank/DDBJ databases">
        <authorList>
            <consortium name="NIH - Mammalian Gene Collection (MGC) project"/>
        </authorList>
    </citation>
    <scope>NUCLEOTIDE SEQUENCE [LARGE SCALE MRNA]</scope>
    <source>
        <strain>Hereford</strain>
        <tissue>Hypothalamus</tissue>
    </source>
</reference>
<reference key="2">
    <citation type="submission" date="2003-01" db="EMBL/GenBank/DDBJ databases">
        <authorList>
            <person name="Adelson D."/>
            <person name="Gill C."/>
        </authorList>
    </citation>
    <scope>NUCLEOTIDE SEQUENCE [LARGE SCALE MRNA] OF 1-43</scope>
</reference>
<gene>
    <name type="primary">PHAX</name>
    <name type="synonym">RNUXA</name>
</gene>
<dbReference type="EMBL" id="BC105227">
    <property type="protein sequence ID" value="AAI05228.1"/>
    <property type="molecule type" value="mRNA"/>
</dbReference>
<dbReference type="EMBL" id="CB171153">
    <property type="status" value="NOT_ANNOTATED_CDS"/>
    <property type="molecule type" value="mRNA"/>
</dbReference>
<dbReference type="RefSeq" id="NP_001160034.1">
    <property type="nucleotide sequence ID" value="NM_001166562.1"/>
</dbReference>
<dbReference type="SMR" id="Q3MHI4"/>
<dbReference type="FunCoup" id="Q3MHI4">
    <property type="interactions" value="4398"/>
</dbReference>
<dbReference type="STRING" id="9913.ENSBTAP00000035479"/>
<dbReference type="PaxDb" id="9913-ENSBTAP00000035479"/>
<dbReference type="Ensembl" id="ENSBTAT00000035608.3">
    <property type="protein sequence ID" value="ENSBTAP00000035479.2"/>
    <property type="gene ID" value="ENSBTAG00000009647.5"/>
</dbReference>
<dbReference type="GeneID" id="507478"/>
<dbReference type="KEGG" id="bta:507478"/>
<dbReference type="CTD" id="51808"/>
<dbReference type="VEuPathDB" id="HostDB:ENSBTAG00000009647"/>
<dbReference type="VGNC" id="VGNC:32807">
    <property type="gene designation" value="PHAX"/>
</dbReference>
<dbReference type="eggNOG" id="KOG3948">
    <property type="taxonomic scope" value="Eukaryota"/>
</dbReference>
<dbReference type="GeneTree" id="ENSGT00390000011084"/>
<dbReference type="HOGENOM" id="CLU_058840_1_0_1"/>
<dbReference type="InParanoid" id="Q3MHI4"/>
<dbReference type="OMA" id="EEGCIKK"/>
<dbReference type="OrthoDB" id="20573at2759"/>
<dbReference type="TreeFam" id="TF321050"/>
<dbReference type="Reactome" id="R-BTA-6807505">
    <property type="pathway name" value="RNA polymerase II transcribes snRNA genes"/>
</dbReference>
<dbReference type="Proteomes" id="UP000009136">
    <property type="component" value="Chromosome 7"/>
</dbReference>
<dbReference type="Bgee" id="ENSBTAG00000009647">
    <property type="expression patterns" value="Expressed in occipital lobe and 104 other cell types or tissues"/>
</dbReference>
<dbReference type="GO" id="GO:0015030">
    <property type="term" value="C:Cajal body"/>
    <property type="evidence" value="ECO:0007669"/>
    <property type="project" value="UniProtKB-SubCell"/>
</dbReference>
<dbReference type="GO" id="GO:0005737">
    <property type="term" value="C:cytoplasm"/>
    <property type="evidence" value="ECO:0007669"/>
    <property type="project" value="UniProtKB-SubCell"/>
</dbReference>
<dbReference type="GO" id="GO:0005634">
    <property type="term" value="C:nucleus"/>
    <property type="evidence" value="ECO:0000318"/>
    <property type="project" value="GO_Central"/>
</dbReference>
<dbReference type="GO" id="GO:1990904">
    <property type="term" value="C:ribonucleoprotein complex"/>
    <property type="evidence" value="ECO:0007669"/>
    <property type="project" value="Ensembl"/>
</dbReference>
<dbReference type="GO" id="GO:0140262">
    <property type="term" value="F:mRNA cap binding complex binding"/>
    <property type="evidence" value="ECO:0007669"/>
    <property type="project" value="Ensembl"/>
</dbReference>
<dbReference type="GO" id="GO:0003723">
    <property type="term" value="F:RNA binding"/>
    <property type="evidence" value="ECO:0007669"/>
    <property type="project" value="UniProtKB-KW"/>
</dbReference>
<dbReference type="GO" id="GO:0015031">
    <property type="term" value="P:protein transport"/>
    <property type="evidence" value="ECO:0007669"/>
    <property type="project" value="UniProtKB-KW"/>
</dbReference>
<dbReference type="GO" id="GO:0043489">
    <property type="term" value="P:RNA stabilization"/>
    <property type="evidence" value="ECO:0007669"/>
    <property type="project" value="Ensembl"/>
</dbReference>
<dbReference type="GO" id="GO:0006408">
    <property type="term" value="P:snRNA export from nucleus"/>
    <property type="evidence" value="ECO:0000318"/>
    <property type="project" value="GO_Central"/>
</dbReference>
<dbReference type="FunFam" id="1.10.10.1440:FF:000001">
    <property type="entry name" value="phosphorylated adapter RNA export protein-like"/>
    <property type="match status" value="1"/>
</dbReference>
<dbReference type="Gene3D" id="1.10.10.1440">
    <property type="entry name" value="PHAX RNA-binding domain"/>
    <property type="match status" value="1"/>
</dbReference>
<dbReference type="InterPro" id="IPR039047">
    <property type="entry name" value="PHAX"/>
</dbReference>
<dbReference type="InterPro" id="IPR019385">
    <property type="entry name" value="PHAX_RNA-binding_domain"/>
</dbReference>
<dbReference type="InterPro" id="IPR038092">
    <property type="entry name" value="PHAX_RNA-binding_sf"/>
</dbReference>
<dbReference type="PANTHER" id="PTHR13135">
    <property type="entry name" value="CYTOSOLIC RESINIFERATOXIN BINDING PROTEIN RBP-26"/>
    <property type="match status" value="1"/>
</dbReference>
<dbReference type="PANTHER" id="PTHR13135:SF0">
    <property type="entry name" value="PHOSPHORYLATED ADAPTER RNA EXPORT PROTEIN"/>
    <property type="match status" value="1"/>
</dbReference>
<dbReference type="Pfam" id="PF10258">
    <property type="entry name" value="PHAX_RNA-bd"/>
    <property type="match status" value="1"/>
</dbReference>
<protein>
    <recommendedName>
        <fullName>Phosphorylated adapter RNA export protein</fullName>
    </recommendedName>
    <alternativeName>
        <fullName>RNA U small nuclear RNA export adapter protein</fullName>
    </alternativeName>
</protein>
<accession>Q3MHI4</accession>
<proteinExistence type="evidence at transcript level"/>
<evidence type="ECO:0000250" key="1"/>
<evidence type="ECO:0000250" key="2">
    <source>
        <dbReference type="UniProtKB" id="Q63068"/>
    </source>
</evidence>
<evidence type="ECO:0000250" key="3">
    <source>
        <dbReference type="UniProtKB" id="Q9H814"/>
    </source>
</evidence>
<evidence type="ECO:0000250" key="4">
    <source>
        <dbReference type="UniProtKB" id="Q9JJT9"/>
    </source>
</evidence>
<evidence type="ECO:0000256" key="5">
    <source>
        <dbReference type="SAM" id="MobiDB-lite"/>
    </source>
</evidence>
<evidence type="ECO:0000305" key="6"/>